<dbReference type="EMBL" id="AF322071">
    <property type="protein sequence ID" value="AAG53688.1"/>
    <property type="molecule type" value="mRNA"/>
</dbReference>
<dbReference type="EMBL" id="BC059656">
    <property type="protein sequence ID" value="AAH59656.1"/>
    <property type="molecule type" value="mRNA"/>
</dbReference>
<dbReference type="FunCoup" id="Q98SV1">
    <property type="interactions" value="59"/>
</dbReference>
<dbReference type="STRING" id="7955.ENSDARP00000116562"/>
<dbReference type="GlyCosmos" id="Q98SV1">
    <property type="glycosylation" value="1 site, No reported glycans"/>
</dbReference>
<dbReference type="PaxDb" id="7955-ENSDARP00000116562"/>
<dbReference type="AGR" id="ZFIN:ZDB-GENE-030311-1"/>
<dbReference type="ZFIN" id="ZDB-GENE-030311-1">
    <property type="gene designation" value="selenop"/>
</dbReference>
<dbReference type="eggNOG" id="ENOG502QWRU">
    <property type="taxonomic scope" value="Eukaryota"/>
</dbReference>
<dbReference type="InParanoid" id="Q98SV1"/>
<dbReference type="PhylomeDB" id="Q98SV1"/>
<dbReference type="Reactome" id="R-DRE-114608">
    <property type="pathway name" value="Platelet degranulation"/>
</dbReference>
<dbReference type="PRO" id="PR:Q98SV1"/>
<dbReference type="Proteomes" id="UP000000437">
    <property type="component" value="Unplaced"/>
</dbReference>
<dbReference type="GO" id="GO:0005576">
    <property type="term" value="C:extracellular region"/>
    <property type="evidence" value="ECO:0000314"/>
    <property type="project" value="UniProtKB"/>
</dbReference>
<dbReference type="GO" id="GO:0008430">
    <property type="term" value="F:selenium binding"/>
    <property type="evidence" value="ECO:0000318"/>
    <property type="project" value="GO_Central"/>
</dbReference>
<dbReference type="GO" id="GO:0001887">
    <property type="term" value="P:selenium compound metabolic process"/>
    <property type="evidence" value="ECO:0000314"/>
    <property type="project" value="ZFIN"/>
</dbReference>
<dbReference type="InterPro" id="IPR007671">
    <property type="entry name" value="Selenoprotein-P_N"/>
</dbReference>
<dbReference type="InterPro" id="IPR007672">
    <property type="entry name" value="SelP_C"/>
</dbReference>
<dbReference type="InterPro" id="IPR037941">
    <property type="entry name" value="SeP"/>
</dbReference>
<dbReference type="PANTHER" id="PTHR10105">
    <property type="entry name" value="SELENOPROTEIN P"/>
    <property type="match status" value="1"/>
</dbReference>
<dbReference type="PANTHER" id="PTHR10105:SF3">
    <property type="entry name" value="SELENOPROTEIN P"/>
    <property type="match status" value="1"/>
</dbReference>
<dbReference type="Pfam" id="PF04593">
    <property type="entry name" value="SelP_C"/>
    <property type="match status" value="1"/>
</dbReference>
<dbReference type="Pfam" id="PF04592">
    <property type="entry name" value="SelP_N"/>
    <property type="match status" value="1"/>
</dbReference>
<proteinExistence type="evidence at protein level"/>
<evidence type="ECO:0000250" key="1">
    <source>
        <dbReference type="UniProtKB" id="P49908"/>
    </source>
</evidence>
<evidence type="ECO:0000255" key="2"/>
<evidence type="ECO:0000256" key="3">
    <source>
        <dbReference type="SAM" id="MobiDB-lite"/>
    </source>
</evidence>
<evidence type="ECO:0000269" key="4">
    <source>
    </source>
</evidence>
<evidence type="ECO:0000303" key="5">
    <source>
    </source>
</evidence>
<evidence type="ECO:0000305" key="6"/>
<evidence type="ECO:0000312" key="7">
    <source>
        <dbReference type="EMBL" id="AAG53688.1"/>
    </source>
</evidence>
<keyword id="KW-0325">Glycoprotein</keyword>
<keyword id="KW-1185">Reference proteome</keyword>
<keyword id="KW-0964">Secreted</keyword>
<keyword id="KW-0711">Selenium</keyword>
<keyword id="KW-0712">Selenocysteine</keyword>
<keyword id="KW-0732">Signal</keyword>
<organism evidence="7">
    <name type="scientific">Danio rerio</name>
    <name type="common">Zebrafish</name>
    <name type="synonym">Brachydanio rerio</name>
    <dbReference type="NCBI Taxonomy" id="7955"/>
    <lineage>
        <taxon>Eukaryota</taxon>
        <taxon>Metazoa</taxon>
        <taxon>Chordata</taxon>
        <taxon>Craniata</taxon>
        <taxon>Vertebrata</taxon>
        <taxon>Euteleostomi</taxon>
        <taxon>Actinopterygii</taxon>
        <taxon>Neopterygii</taxon>
        <taxon>Teleostei</taxon>
        <taxon>Ostariophysi</taxon>
        <taxon>Cypriniformes</taxon>
        <taxon>Danionidae</taxon>
        <taxon>Danioninae</taxon>
        <taxon>Danio</taxon>
    </lineage>
</organism>
<reference evidence="6" key="1">
    <citation type="journal article" date="2000" name="Genes Cells">
        <title>Selenium metabolism in zebrafish: multiplicity of selenoprotein genes and expression of a protein containing 17 selenocysteine residues.</title>
        <authorList>
            <person name="Kryukov G.V."/>
            <person name="Gladyshev V.N."/>
        </authorList>
    </citation>
    <scope>NUCLEOTIDE SEQUENCE [MRNA]</scope>
    <scope>CHARACTERIZATION</scope>
</reference>
<reference key="2">
    <citation type="submission" date="2003-10" db="EMBL/GenBank/DDBJ databases">
        <authorList>
            <consortium name="NIH - Zebrafish Gene Collection (ZGC) project"/>
        </authorList>
    </citation>
    <scope>NUCLEOTIDE SEQUENCE [LARGE SCALE MRNA]</scope>
    <source>
        <tissue>Retina</tissue>
    </source>
</reference>
<accession>Q98SV1</accession>
<name>SELPA_DANRE</name>
<sequence>MWKALSLTLALCLLVGCSAESETEGARCKLPPEWKVGDVEPMKNALGQVTVVAYLQASULFCLEQASKLNDLLLKLENQGYPNIAYMVVNNREERSQRLHHLLQERLLNITLYAQDLSQPDAWQAVNAEKDDILVYDRCGRLTYHLSLPYTILSHPHVEEAIKHTYCDRICGECSLESSAQLEECKKATEEVNKPVEEEPRQDHGHHEHGHHEHQGEAERHRHGHHHPHHHHHHHRGQQQVDVDQQVLSQVDFGQVAVETPMMKRPUAKHSRUKVQYSUQQGADSPVASUCUHURQLFGGEGNGRVAGLUHCDEPLPASUPUQGLKEQDNHIKETUQURPAPPAEUELSQPTUVUPAGDATUGURKK</sequence>
<feature type="signal peptide" evidence="2">
    <location>
        <begin position="1"/>
        <end position="19"/>
    </location>
</feature>
<feature type="chain" id="PRO_0000022300" description="Selenoprotein Pa">
    <location>
        <begin position="20"/>
        <end position="367"/>
    </location>
</feature>
<feature type="region of interest" description="Disordered" evidence="3">
    <location>
        <begin position="191"/>
        <end position="241"/>
    </location>
</feature>
<feature type="region of interest" description="Disordered" evidence="3">
    <location>
        <begin position="309"/>
        <end position="367"/>
    </location>
</feature>
<feature type="compositionally biased region" description="Basic and acidic residues" evidence="3">
    <location>
        <begin position="191"/>
        <end position="220"/>
    </location>
</feature>
<feature type="compositionally biased region" description="Basic residues" evidence="3">
    <location>
        <begin position="221"/>
        <end position="237"/>
    </location>
</feature>
<feature type="compositionally biased region" description="Basic and acidic residues" evidence="3">
    <location>
        <begin position="326"/>
        <end position="336"/>
    </location>
</feature>
<feature type="non-standard amino acid" description="Selenocysteine" evidence="5">
    <location>
        <position position="59"/>
    </location>
</feature>
<feature type="non-standard amino acid" description="Selenocysteine" evidence="5">
    <location>
        <position position="267"/>
    </location>
</feature>
<feature type="non-standard amino acid" description="Selenocysteine" evidence="5">
    <location>
        <position position="273"/>
    </location>
</feature>
<feature type="non-standard amino acid" description="Selenocysteine" evidence="5">
    <location>
        <position position="279"/>
    </location>
</feature>
<feature type="non-standard amino acid" description="Selenocysteine" evidence="5">
    <location>
        <position position="290"/>
    </location>
</feature>
<feature type="non-standard amino acid" description="Selenocysteine" evidence="5">
    <location>
        <position position="292"/>
    </location>
</feature>
<feature type="non-standard amino acid" description="Selenocysteine" evidence="5">
    <location>
        <position position="294"/>
    </location>
</feature>
<feature type="non-standard amino acid" description="Selenocysteine" evidence="5">
    <location>
        <position position="310"/>
    </location>
</feature>
<feature type="non-standard amino acid" description="Selenocysteine" evidence="5">
    <location>
        <position position="320"/>
    </location>
</feature>
<feature type="non-standard amino acid" description="Selenocysteine" evidence="5">
    <location>
        <position position="322"/>
    </location>
</feature>
<feature type="non-standard amino acid" description="Selenocysteine" evidence="5">
    <location>
        <position position="336"/>
    </location>
</feature>
<feature type="non-standard amino acid" description="Selenocysteine" evidence="5">
    <location>
        <position position="338"/>
    </location>
</feature>
<feature type="non-standard amino acid" description="Selenocysteine" evidence="5">
    <location>
        <position position="346"/>
    </location>
</feature>
<feature type="non-standard amino acid" description="Selenocysteine" evidence="5">
    <location>
        <position position="353"/>
    </location>
</feature>
<feature type="non-standard amino acid" description="Selenocysteine" evidence="5">
    <location>
        <position position="355"/>
    </location>
</feature>
<feature type="non-standard amino acid" description="Selenocysteine" evidence="5">
    <location>
        <position position="362"/>
    </location>
</feature>
<feature type="non-standard amino acid" description="Selenocysteine" evidence="5">
    <location>
        <position position="364"/>
    </location>
</feature>
<feature type="glycosylation site" description="N-linked (GlcNAc...) asparagine" evidence="2">
    <location>
        <position position="109"/>
    </location>
</feature>
<comment type="function">
    <text evidence="1">Might be responsible for some of the extracellular antioxidant defense properties of selenium or might be involved in the transport of selenium.</text>
</comment>
<comment type="subcellular location">
    <subcellularLocation>
        <location evidence="4">Secreted</location>
    </subcellularLocation>
</comment>
<comment type="similarity">
    <text evidence="6">Belongs to the selenoprotein P family.</text>
</comment>
<protein>
    <recommendedName>
        <fullName>Selenoprotein Pa</fullName>
        <shortName>zSelPa</shortName>
    </recommendedName>
</protein>
<gene>
    <name type="primary">sepp1a</name>
</gene>